<accession>Q7TPF1</accession>
<feature type="chain" id="PRO_0000328797" description="Small cell adhesion glycoprotein">
    <location>
        <begin position="1"/>
        <end position="97"/>
    </location>
</feature>
<feature type="topological domain" description="Extracellular" evidence="1">
    <location>
        <begin position="1"/>
        <end position="36"/>
    </location>
</feature>
<feature type="transmembrane region" description="Helical; Signal-anchor for type III membrane protein" evidence="1">
    <location>
        <begin position="37"/>
        <end position="57"/>
    </location>
</feature>
<feature type="topological domain" description="Cytoplasmic" evidence="1">
    <location>
        <begin position="58"/>
        <end position="97"/>
    </location>
</feature>
<feature type="glycosylation site" description="O-linked (GalNAc...) threonine" evidence="1">
    <location>
        <position position="7"/>
    </location>
</feature>
<feature type="glycosylation site" description="O-linked (GalNAc...) serine" evidence="1">
    <location>
        <position position="9"/>
    </location>
</feature>
<feature type="glycosylation site" description="O-linked (GalNAc...) threonine" evidence="1">
    <location>
        <position position="15"/>
    </location>
</feature>
<feature type="glycosylation site" description="O-linked (GalNAc...) threonine" evidence="1">
    <location>
        <position position="16"/>
    </location>
</feature>
<feature type="glycosylation site" description="O-linked (GalNAc...) threonine" evidence="1">
    <location>
        <position position="24"/>
    </location>
</feature>
<feature type="glycosylation site" description="O-linked (GalNAc...) serine" evidence="1">
    <location>
        <position position="26"/>
    </location>
</feature>
<name>SMAGP_RAT</name>
<dbReference type="EMBL" id="AJ577837">
    <property type="protein sequence ID" value="CAE12295.1"/>
    <property type="molecule type" value="mRNA"/>
</dbReference>
<dbReference type="EMBL" id="BC101910">
    <property type="protein sequence ID" value="AAI01911.1"/>
    <property type="molecule type" value="mRNA"/>
</dbReference>
<dbReference type="RefSeq" id="NP_877969.1">
    <property type="nucleotide sequence ID" value="NM_182817.2"/>
</dbReference>
<dbReference type="RefSeq" id="XP_006242385.1">
    <property type="nucleotide sequence ID" value="XM_006242323.5"/>
</dbReference>
<dbReference type="RefSeq" id="XP_038934863.1">
    <property type="nucleotide sequence ID" value="XM_039078935.2"/>
</dbReference>
<dbReference type="FunCoup" id="Q7TPF1">
    <property type="interactions" value="97"/>
</dbReference>
<dbReference type="STRING" id="10116.ENSRNOP00000066061"/>
<dbReference type="GlyCosmos" id="Q7TPF1">
    <property type="glycosylation" value="6 sites, No reported glycans"/>
</dbReference>
<dbReference type="GlyGen" id="Q7TPF1">
    <property type="glycosylation" value="6 sites"/>
</dbReference>
<dbReference type="PhosphoSitePlus" id="Q7TPF1"/>
<dbReference type="PaxDb" id="10116-ENSRNOP00000066061"/>
<dbReference type="Ensembl" id="ENSRNOT00000117455.1">
    <property type="protein sequence ID" value="ENSRNOP00000088015.1"/>
    <property type="gene ID" value="ENSRNOG00000062981.1"/>
</dbReference>
<dbReference type="GeneID" id="300236"/>
<dbReference type="KEGG" id="rno:300236"/>
<dbReference type="UCSC" id="RGD:727777">
    <property type="organism name" value="rat"/>
</dbReference>
<dbReference type="AGR" id="RGD:727777"/>
<dbReference type="CTD" id="57228"/>
<dbReference type="RGD" id="727777">
    <property type="gene designation" value="Smagp"/>
</dbReference>
<dbReference type="eggNOG" id="ENOG502S7EH">
    <property type="taxonomic scope" value="Eukaryota"/>
</dbReference>
<dbReference type="GeneTree" id="ENSGT00390000010077"/>
<dbReference type="HOGENOM" id="CLU_175196_0_0_1"/>
<dbReference type="InParanoid" id="Q7TPF1"/>
<dbReference type="OMA" id="QMEDFPH"/>
<dbReference type="PhylomeDB" id="Q7TPF1"/>
<dbReference type="TreeFam" id="TF337016"/>
<dbReference type="PRO" id="PR:Q7TPF1"/>
<dbReference type="Proteomes" id="UP000002494">
    <property type="component" value="Chromosome 7"/>
</dbReference>
<dbReference type="Bgee" id="ENSRNOG00000048932">
    <property type="expression patterns" value="Expressed in kidney and 18 other cell types or tissues"/>
</dbReference>
<dbReference type="GO" id="GO:0030659">
    <property type="term" value="C:cytoplasmic vesicle membrane"/>
    <property type="evidence" value="ECO:0007669"/>
    <property type="project" value="UniProtKB-SubCell"/>
</dbReference>
<dbReference type="GO" id="GO:0005886">
    <property type="term" value="C:plasma membrane"/>
    <property type="evidence" value="ECO:0007669"/>
    <property type="project" value="UniProtKB-SubCell"/>
</dbReference>
<dbReference type="InterPro" id="IPR043243">
    <property type="entry name" value="SMAGP"/>
</dbReference>
<dbReference type="PANTHER" id="PTHR47394">
    <property type="entry name" value="SMALL CELL ADHESION GLYCOPROTEIN"/>
    <property type="match status" value="1"/>
</dbReference>
<dbReference type="PANTHER" id="PTHR47394:SF1">
    <property type="entry name" value="SMALL CELL ADHESION GLYCOPROTEIN"/>
    <property type="match status" value="1"/>
</dbReference>
<protein>
    <recommendedName>
        <fullName>Small cell adhesion glycoprotein</fullName>
        <shortName>Small transmembrane and glycosylated protein</shortName>
    </recommendedName>
</protein>
<reference key="1">
    <citation type="journal article" date="2004" name="Oncogene">
        <title>SMAGP, a new small trans-membrane glycoprotein altered in cancer.</title>
        <authorList>
            <person name="Tarbe N.G."/>
            <person name="Rio M.-C."/>
            <person name="Weidle U.H."/>
        </authorList>
    </citation>
    <scope>NUCLEOTIDE SEQUENCE [MRNA]</scope>
    <scope>SUBCELLULAR LOCATION</scope>
    <scope>TISSUE SPECIFICITY</scope>
    <scope>GLYCOSYLATION</scope>
    <source>
        <strain>BDX</strain>
    </source>
</reference>
<reference key="2">
    <citation type="journal article" date="2004" name="Genome Res.">
        <title>The status, quality, and expansion of the NIH full-length cDNA project: the Mammalian Gene Collection (MGC).</title>
        <authorList>
            <consortium name="The MGC Project Team"/>
        </authorList>
    </citation>
    <scope>NUCLEOTIDE SEQUENCE [LARGE SCALE MRNA]</scope>
    <source>
        <tissue>Prostate</tissue>
    </source>
</reference>
<reference key="3">
    <citation type="journal article" date="2005" name="Int. J. Cancer">
        <title>Overexpression of the small transmembrane and glycosylated protein SMAGP supports metastasis formation of a rat pancreatic adenocarcinoma line.</title>
        <authorList>
            <person name="Tarbe N.G."/>
            <person name="Rio M.-C."/>
            <person name="Hummel S."/>
            <person name="Weidle U.H."/>
            <person name="Zoeller M."/>
        </authorList>
    </citation>
    <scope>SUBCELLULAR LOCATION</scope>
    <scope>FUNCTION</scope>
</reference>
<reference key="4">
    <citation type="journal article" date="2012" name="Nat. Commun.">
        <title>Quantitative maps of protein phosphorylation sites across 14 different rat organs and tissues.</title>
        <authorList>
            <person name="Lundby A."/>
            <person name="Secher A."/>
            <person name="Lage K."/>
            <person name="Nordsborg N.B."/>
            <person name="Dmytriyev A."/>
            <person name="Lundby C."/>
            <person name="Olsen J.V."/>
        </authorList>
    </citation>
    <scope>IDENTIFICATION BY MASS SPECTROMETRY [LARGE SCALE ANALYSIS]</scope>
</reference>
<evidence type="ECO:0000255" key="1"/>
<evidence type="ECO:0000269" key="2">
    <source>
    </source>
</evidence>
<evidence type="ECO:0000269" key="3">
    <source>
    </source>
</evidence>
<evidence type="ECO:0000305" key="4"/>
<keyword id="KW-1003">Cell membrane</keyword>
<keyword id="KW-0968">Cytoplasmic vesicle</keyword>
<keyword id="KW-0325">Glycoprotein</keyword>
<keyword id="KW-0472">Membrane</keyword>
<keyword id="KW-1185">Reference proteome</keyword>
<keyword id="KW-0730">Sialic acid</keyword>
<keyword id="KW-0812">Transmembrane</keyword>
<keyword id="KW-1133">Transmembrane helix</keyword>
<gene>
    <name type="primary">Smagp</name>
</gene>
<proteinExistence type="evidence at protein level"/>
<comment type="function">
    <text evidence="3">May play a role in epithelial cell-cell contacts. May play a role in tumor invasiveness and metastasis formation.</text>
</comment>
<comment type="subcellular location">
    <subcellularLocation>
        <location evidence="2">Cell membrane</location>
        <topology evidence="1">Single-pass type III membrane protein</topology>
    </subcellularLocation>
    <subcellularLocation>
        <location evidence="3">Cytoplasmic vesicle membrane</location>
        <topology evidence="1">Single-pass type III membrane protein</topology>
    </subcellularLocation>
    <text evidence="2 3">Predominantly on lateral parts of the membrane, at cell-cell epithelial junctions (PubMed:15021913). Detected on cytoplasmic membranes in undifferentiated tumors.</text>
</comment>
<comment type="tissue specificity">
    <text evidence="2">Detected in brain (at protein level). Highly expressed in kidney and placenta. Detected in skin, breast, heart, lung, liver, prostate, spleen, small intestine, colon and stomach.</text>
</comment>
<comment type="PTM">
    <text evidence="2">O-glycosylated. The O-glycan is modified with sialic acid residues.</text>
</comment>
<comment type="similarity">
    <text evidence="4">Belongs to the SMAGP family.</text>
</comment>
<organism>
    <name type="scientific">Rattus norvegicus</name>
    <name type="common">Rat</name>
    <dbReference type="NCBI Taxonomy" id="10116"/>
    <lineage>
        <taxon>Eukaryota</taxon>
        <taxon>Metazoa</taxon>
        <taxon>Chordata</taxon>
        <taxon>Craniata</taxon>
        <taxon>Vertebrata</taxon>
        <taxon>Euteleostomi</taxon>
        <taxon>Mammalia</taxon>
        <taxon>Eutheria</taxon>
        <taxon>Euarchontoglires</taxon>
        <taxon>Glires</taxon>
        <taxon>Rodentia</taxon>
        <taxon>Myomorpha</taxon>
        <taxon>Muroidea</taxon>
        <taxon>Muridae</taxon>
        <taxon>Murinae</taxon>
        <taxon>Rattus</taxon>
    </lineage>
</organism>
<sequence>MNNLPATPSPEELMTTPVFQAPETMSPQAEEASTALIAVVITVVFLTLLSVVTLIFFYLYKNKGSYVTYEPAEGEPSAILQMETDSAKGKEKEEYFI</sequence>